<protein>
    <recommendedName>
        <fullName>Protein FAM136A</fullName>
    </recommendedName>
</protein>
<dbReference type="EMBL" id="AK027574">
    <property type="protein sequence ID" value="BAB55208.1"/>
    <property type="molecule type" value="mRNA"/>
</dbReference>
<dbReference type="EMBL" id="AC022201">
    <property type="protein sequence ID" value="AAX93110.1"/>
    <property type="molecule type" value="Genomic_DNA"/>
</dbReference>
<dbReference type="EMBL" id="BC014975">
    <property type="protein sequence ID" value="AAH14975.1"/>
    <property type="molecule type" value="mRNA"/>
</dbReference>
<dbReference type="CCDS" id="CCDS1904.1"/>
<dbReference type="RefSeq" id="NP_116211.2">
    <property type="nucleotide sequence ID" value="NM_032822.3"/>
</dbReference>
<dbReference type="SMR" id="Q96C01"/>
<dbReference type="BioGRID" id="124345">
    <property type="interactions" value="114"/>
</dbReference>
<dbReference type="FunCoup" id="Q96C01">
    <property type="interactions" value="1539"/>
</dbReference>
<dbReference type="IntAct" id="Q96C01">
    <property type="interactions" value="97"/>
</dbReference>
<dbReference type="MINT" id="Q96C01"/>
<dbReference type="GlyGen" id="Q96C01">
    <property type="glycosylation" value="1 site, 1 O-linked glycan (1 site)"/>
</dbReference>
<dbReference type="iPTMnet" id="Q96C01"/>
<dbReference type="MetOSite" id="Q96C01"/>
<dbReference type="PhosphoSitePlus" id="Q96C01"/>
<dbReference type="BioMuta" id="FAM136A"/>
<dbReference type="DMDM" id="74751785"/>
<dbReference type="jPOST" id="Q96C01"/>
<dbReference type="MassIVE" id="Q96C01"/>
<dbReference type="PaxDb" id="9606-ENSP00000037869"/>
<dbReference type="PeptideAtlas" id="Q96C01"/>
<dbReference type="ProteomicsDB" id="76138"/>
<dbReference type="Pumba" id="Q96C01"/>
<dbReference type="Antibodypedia" id="31110">
    <property type="antibodies" value="43 antibodies from 11 providers"/>
</dbReference>
<dbReference type="DNASU" id="84908"/>
<dbReference type="Ensembl" id="ENST00000037869.8">
    <property type="protein sequence ID" value="ENSP00000037869.3"/>
    <property type="gene ID" value="ENSG00000035141.10"/>
</dbReference>
<dbReference type="GeneID" id="84908"/>
<dbReference type="KEGG" id="hsa:84908"/>
<dbReference type="UCSC" id="uc002sgq.5">
    <property type="organism name" value="human"/>
</dbReference>
<dbReference type="AGR" id="HGNC:25911"/>
<dbReference type="CTD" id="84908"/>
<dbReference type="DisGeNET" id="84908"/>
<dbReference type="GeneCards" id="FAM136A"/>
<dbReference type="HGNC" id="HGNC:25911">
    <property type="gene designation" value="FAM136A"/>
</dbReference>
<dbReference type="HPA" id="ENSG00000035141">
    <property type="expression patterns" value="Low tissue specificity"/>
</dbReference>
<dbReference type="MalaCards" id="FAM136A"/>
<dbReference type="MIM" id="616275">
    <property type="type" value="gene"/>
</dbReference>
<dbReference type="neXtProt" id="NX_Q96C01"/>
<dbReference type="OpenTargets" id="ENSG00000035141"/>
<dbReference type="PharmGKB" id="PA162386322"/>
<dbReference type="VEuPathDB" id="HostDB:ENSG00000035141"/>
<dbReference type="eggNOG" id="KOG3377">
    <property type="taxonomic scope" value="Eukaryota"/>
</dbReference>
<dbReference type="GeneTree" id="ENSGT00390000006707"/>
<dbReference type="HOGENOM" id="CLU_110442_3_0_1"/>
<dbReference type="InParanoid" id="Q96C01"/>
<dbReference type="OrthoDB" id="9975421at2759"/>
<dbReference type="PAN-GO" id="Q96C01">
    <property type="GO annotations" value="1 GO annotation based on evolutionary models"/>
</dbReference>
<dbReference type="PhylomeDB" id="Q96C01"/>
<dbReference type="TreeFam" id="TF315119"/>
<dbReference type="PathwayCommons" id="Q96C01"/>
<dbReference type="SignaLink" id="Q96C01"/>
<dbReference type="BioGRID-ORCS" id="84908">
    <property type="hits" value="301 hits in 1162 CRISPR screens"/>
</dbReference>
<dbReference type="CD-CODE" id="91857CE7">
    <property type="entry name" value="Nucleolus"/>
</dbReference>
<dbReference type="ChiTaRS" id="FAM136A">
    <property type="organism name" value="human"/>
</dbReference>
<dbReference type="GeneWiki" id="FAM136A"/>
<dbReference type="GenomeRNAi" id="84908"/>
<dbReference type="Pharos" id="Q96C01">
    <property type="development level" value="Tdark"/>
</dbReference>
<dbReference type="PRO" id="PR:Q96C01"/>
<dbReference type="Proteomes" id="UP000005640">
    <property type="component" value="Chromosome 2"/>
</dbReference>
<dbReference type="RNAct" id="Q96C01">
    <property type="molecule type" value="protein"/>
</dbReference>
<dbReference type="Bgee" id="ENSG00000035141">
    <property type="expression patterns" value="Expressed in parotid gland and 208 other cell types or tissues"/>
</dbReference>
<dbReference type="ExpressionAtlas" id="Q96C01">
    <property type="expression patterns" value="baseline and differential"/>
</dbReference>
<dbReference type="GO" id="GO:0005737">
    <property type="term" value="C:cytoplasm"/>
    <property type="evidence" value="ECO:0000314"/>
    <property type="project" value="LIFEdb"/>
</dbReference>
<dbReference type="GO" id="GO:0005739">
    <property type="term" value="C:mitochondrion"/>
    <property type="evidence" value="ECO:0006056"/>
    <property type="project" value="FlyBase"/>
</dbReference>
<dbReference type="InterPro" id="IPR008560">
    <property type="entry name" value="DUF842_euk"/>
</dbReference>
<dbReference type="PANTHER" id="PTHR21096">
    <property type="entry name" value="PROTEIN FAM136A"/>
    <property type="match status" value="1"/>
</dbReference>
<dbReference type="PANTHER" id="PTHR21096:SF0">
    <property type="entry name" value="PROTEIN FAM136A"/>
    <property type="match status" value="1"/>
</dbReference>
<dbReference type="Pfam" id="PF05811">
    <property type="entry name" value="DUF842"/>
    <property type="match status" value="1"/>
</dbReference>
<name>F136A_HUMAN</name>
<gene>
    <name type="primary">FAM136A</name>
</gene>
<evidence type="ECO:0000250" key="1">
    <source>
        <dbReference type="UniProtKB" id="B0BN94"/>
    </source>
</evidence>
<evidence type="ECO:0000305" key="2"/>
<evidence type="ECO:0007744" key="3">
    <source>
    </source>
</evidence>
<accession>Q96C01</accession>
<accession>Q96SS3</accession>
<sequence length="138" mass="15641">MAELQQLRVQEAVESMVKSLERENIRKMQGLMFRCSASCCEDSQASMKQVHQCIERCHVPLAQAQALVTSELEKFQDRLARCTMHCNDKAKDSIDAGSKELQVKQQLDSCVTKCVDDHMHLIPTMTKKMKEALLSIGK</sequence>
<feature type="initiator methionine" description="Removed" evidence="3">
    <location>
        <position position="1"/>
    </location>
</feature>
<feature type="chain" id="PRO_0000296950" description="Protein FAM136A">
    <location>
        <begin position="2"/>
        <end position="138"/>
    </location>
</feature>
<feature type="modified residue" description="N-acetylalanine" evidence="3">
    <location>
        <position position="2"/>
    </location>
</feature>
<feature type="modified residue" description="Phosphothreonine" evidence="1">
    <location>
        <position position="124"/>
    </location>
</feature>
<feature type="modified residue" description="Phosphothreonine" evidence="1">
    <location>
        <position position="126"/>
    </location>
</feature>
<feature type="sequence conflict" description="In Ref. 1; BAB55208." evidence="2" ref="1">
    <original>V</original>
    <variation>M</variation>
    <location>
        <position position="13"/>
    </location>
</feature>
<proteinExistence type="evidence at protein level"/>
<reference key="1">
    <citation type="journal article" date="2004" name="Nat. Genet.">
        <title>Complete sequencing and characterization of 21,243 full-length human cDNAs.</title>
        <authorList>
            <person name="Ota T."/>
            <person name="Suzuki Y."/>
            <person name="Nishikawa T."/>
            <person name="Otsuki T."/>
            <person name="Sugiyama T."/>
            <person name="Irie R."/>
            <person name="Wakamatsu A."/>
            <person name="Hayashi K."/>
            <person name="Sato H."/>
            <person name="Nagai K."/>
            <person name="Kimura K."/>
            <person name="Makita H."/>
            <person name="Sekine M."/>
            <person name="Obayashi M."/>
            <person name="Nishi T."/>
            <person name="Shibahara T."/>
            <person name="Tanaka T."/>
            <person name="Ishii S."/>
            <person name="Yamamoto J."/>
            <person name="Saito K."/>
            <person name="Kawai Y."/>
            <person name="Isono Y."/>
            <person name="Nakamura Y."/>
            <person name="Nagahari K."/>
            <person name="Murakami K."/>
            <person name="Yasuda T."/>
            <person name="Iwayanagi T."/>
            <person name="Wagatsuma M."/>
            <person name="Shiratori A."/>
            <person name="Sudo H."/>
            <person name="Hosoiri T."/>
            <person name="Kaku Y."/>
            <person name="Kodaira H."/>
            <person name="Kondo H."/>
            <person name="Sugawara M."/>
            <person name="Takahashi M."/>
            <person name="Kanda K."/>
            <person name="Yokoi T."/>
            <person name="Furuya T."/>
            <person name="Kikkawa E."/>
            <person name="Omura Y."/>
            <person name="Abe K."/>
            <person name="Kamihara K."/>
            <person name="Katsuta N."/>
            <person name="Sato K."/>
            <person name="Tanikawa M."/>
            <person name="Yamazaki M."/>
            <person name="Ninomiya K."/>
            <person name="Ishibashi T."/>
            <person name="Yamashita H."/>
            <person name="Murakawa K."/>
            <person name="Fujimori K."/>
            <person name="Tanai H."/>
            <person name="Kimata M."/>
            <person name="Watanabe M."/>
            <person name="Hiraoka S."/>
            <person name="Chiba Y."/>
            <person name="Ishida S."/>
            <person name="Ono Y."/>
            <person name="Takiguchi S."/>
            <person name="Watanabe S."/>
            <person name="Yosida M."/>
            <person name="Hotuta T."/>
            <person name="Kusano J."/>
            <person name="Kanehori K."/>
            <person name="Takahashi-Fujii A."/>
            <person name="Hara H."/>
            <person name="Tanase T.-O."/>
            <person name="Nomura Y."/>
            <person name="Togiya S."/>
            <person name="Komai F."/>
            <person name="Hara R."/>
            <person name="Takeuchi K."/>
            <person name="Arita M."/>
            <person name="Imose N."/>
            <person name="Musashino K."/>
            <person name="Yuuki H."/>
            <person name="Oshima A."/>
            <person name="Sasaki N."/>
            <person name="Aotsuka S."/>
            <person name="Yoshikawa Y."/>
            <person name="Matsunawa H."/>
            <person name="Ichihara T."/>
            <person name="Shiohata N."/>
            <person name="Sano S."/>
            <person name="Moriya S."/>
            <person name="Momiyama H."/>
            <person name="Satoh N."/>
            <person name="Takami S."/>
            <person name="Terashima Y."/>
            <person name="Suzuki O."/>
            <person name="Nakagawa S."/>
            <person name="Senoh A."/>
            <person name="Mizoguchi H."/>
            <person name="Goto Y."/>
            <person name="Shimizu F."/>
            <person name="Wakebe H."/>
            <person name="Hishigaki H."/>
            <person name="Watanabe T."/>
            <person name="Sugiyama A."/>
            <person name="Takemoto M."/>
            <person name="Kawakami B."/>
            <person name="Yamazaki M."/>
            <person name="Watanabe K."/>
            <person name="Kumagai A."/>
            <person name="Itakura S."/>
            <person name="Fukuzumi Y."/>
            <person name="Fujimori Y."/>
            <person name="Komiyama M."/>
            <person name="Tashiro H."/>
            <person name="Tanigami A."/>
            <person name="Fujiwara T."/>
            <person name="Ono T."/>
            <person name="Yamada K."/>
            <person name="Fujii Y."/>
            <person name="Ozaki K."/>
            <person name="Hirao M."/>
            <person name="Ohmori Y."/>
            <person name="Kawabata A."/>
            <person name="Hikiji T."/>
            <person name="Kobatake N."/>
            <person name="Inagaki H."/>
            <person name="Ikema Y."/>
            <person name="Okamoto S."/>
            <person name="Okitani R."/>
            <person name="Kawakami T."/>
            <person name="Noguchi S."/>
            <person name="Itoh T."/>
            <person name="Shigeta K."/>
            <person name="Senba T."/>
            <person name="Matsumura K."/>
            <person name="Nakajima Y."/>
            <person name="Mizuno T."/>
            <person name="Morinaga M."/>
            <person name="Sasaki M."/>
            <person name="Togashi T."/>
            <person name="Oyama M."/>
            <person name="Hata H."/>
            <person name="Watanabe M."/>
            <person name="Komatsu T."/>
            <person name="Mizushima-Sugano J."/>
            <person name="Satoh T."/>
            <person name="Shirai Y."/>
            <person name="Takahashi Y."/>
            <person name="Nakagawa K."/>
            <person name="Okumura K."/>
            <person name="Nagase T."/>
            <person name="Nomura N."/>
            <person name="Kikuchi H."/>
            <person name="Masuho Y."/>
            <person name="Yamashita R."/>
            <person name="Nakai K."/>
            <person name="Yada T."/>
            <person name="Nakamura Y."/>
            <person name="Ohara O."/>
            <person name="Isogai T."/>
            <person name="Sugano S."/>
        </authorList>
    </citation>
    <scope>NUCLEOTIDE SEQUENCE [LARGE SCALE MRNA]</scope>
    <source>
        <tissue>Teratocarcinoma</tissue>
    </source>
</reference>
<reference key="2">
    <citation type="journal article" date="2005" name="Nature">
        <title>Generation and annotation of the DNA sequences of human chromosomes 2 and 4.</title>
        <authorList>
            <person name="Hillier L.W."/>
            <person name="Graves T.A."/>
            <person name="Fulton R.S."/>
            <person name="Fulton L.A."/>
            <person name="Pepin K.H."/>
            <person name="Minx P."/>
            <person name="Wagner-McPherson C."/>
            <person name="Layman D."/>
            <person name="Wylie K."/>
            <person name="Sekhon M."/>
            <person name="Becker M.C."/>
            <person name="Fewell G.A."/>
            <person name="Delehaunty K.D."/>
            <person name="Miner T.L."/>
            <person name="Nash W.E."/>
            <person name="Kremitzki C."/>
            <person name="Oddy L."/>
            <person name="Du H."/>
            <person name="Sun H."/>
            <person name="Bradshaw-Cordum H."/>
            <person name="Ali J."/>
            <person name="Carter J."/>
            <person name="Cordes M."/>
            <person name="Harris A."/>
            <person name="Isak A."/>
            <person name="van Brunt A."/>
            <person name="Nguyen C."/>
            <person name="Du F."/>
            <person name="Courtney L."/>
            <person name="Kalicki J."/>
            <person name="Ozersky P."/>
            <person name="Abbott S."/>
            <person name="Armstrong J."/>
            <person name="Belter E.A."/>
            <person name="Caruso L."/>
            <person name="Cedroni M."/>
            <person name="Cotton M."/>
            <person name="Davidson T."/>
            <person name="Desai A."/>
            <person name="Elliott G."/>
            <person name="Erb T."/>
            <person name="Fronick C."/>
            <person name="Gaige T."/>
            <person name="Haakenson W."/>
            <person name="Haglund K."/>
            <person name="Holmes A."/>
            <person name="Harkins R."/>
            <person name="Kim K."/>
            <person name="Kruchowski S.S."/>
            <person name="Strong C.M."/>
            <person name="Grewal N."/>
            <person name="Goyea E."/>
            <person name="Hou S."/>
            <person name="Levy A."/>
            <person name="Martinka S."/>
            <person name="Mead K."/>
            <person name="McLellan M.D."/>
            <person name="Meyer R."/>
            <person name="Randall-Maher J."/>
            <person name="Tomlinson C."/>
            <person name="Dauphin-Kohlberg S."/>
            <person name="Kozlowicz-Reilly A."/>
            <person name="Shah N."/>
            <person name="Swearengen-Shahid S."/>
            <person name="Snider J."/>
            <person name="Strong J.T."/>
            <person name="Thompson J."/>
            <person name="Yoakum M."/>
            <person name="Leonard S."/>
            <person name="Pearman C."/>
            <person name="Trani L."/>
            <person name="Radionenko M."/>
            <person name="Waligorski J.E."/>
            <person name="Wang C."/>
            <person name="Rock S.M."/>
            <person name="Tin-Wollam A.-M."/>
            <person name="Maupin R."/>
            <person name="Latreille P."/>
            <person name="Wendl M.C."/>
            <person name="Yang S.-P."/>
            <person name="Pohl C."/>
            <person name="Wallis J.W."/>
            <person name="Spieth J."/>
            <person name="Bieri T.A."/>
            <person name="Berkowicz N."/>
            <person name="Nelson J.O."/>
            <person name="Osborne J."/>
            <person name="Ding L."/>
            <person name="Meyer R."/>
            <person name="Sabo A."/>
            <person name="Shotland Y."/>
            <person name="Sinha P."/>
            <person name="Wohldmann P.E."/>
            <person name="Cook L.L."/>
            <person name="Hickenbotham M.T."/>
            <person name="Eldred J."/>
            <person name="Williams D."/>
            <person name="Jones T.A."/>
            <person name="She X."/>
            <person name="Ciccarelli F.D."/>
            <person name="Izaurralde E."/>
            <person name="Taylor J."/>
            <person name="Schmutz J."/>
            <person name="Myers R.M."/>
            <person name="Cox D.R."/>
            <person name="Huang X."/>
            <person name="McPherson J.D."/>
            <person name="Mardis E.R."/>
            <person name="Clifton S.W."/>
            <person name="Warren W.C."/>
            <person name="Chinwalla A.T."/>
            <person name="Eddy S.R."/>
            <person name="Marra M.A."/>
            <person name="Ovcharenko I."/>
            <person name="Furey T.S."/>
            <person name="Miller W."/>
            <person name="Eichler E.E."/>
            <person name="Bork P."/>
            <person name="Suyama M."/>
            <person name="Torrents D."/>
            <person name="Waterston R.H."/>
            <person name="Wilson R.K."/>
        </authorList>
    </citation>
    <scope>NUCLEOTIDE SEQUENCE [LARGE SCALE GENOMIC DNA]</scope>
</reference>
<reference key="3">
    <citation type="journal article" date="2004" name="Genome Res.">
        <title>The status, quality, and expansion of the NIH full-length cDNA project: the Mammalian Gene Collection (MGC).</title>
        <authorList>
            <consortium name="The MGC Project Team"/>
        </authorList>
    </citation>
    <scope>NUCLEOTIDE SEQUENCE [LARGE SCALE MRNA]</scope>
    <source>
        <tissue>Muscle</tissue>
    </source>
</reference>
<reference key="4">
    <citation type="journal article" date="2009" name="Anal. Chem.">
        <title>Lys-N and trypsin cover complementary parts of the phosphoproteome in a refined SCX-based approach.</title>
        <authorList>
            <person name="Gauci S."/>
            <person name="Helbig A.O."/>
            <person name="Slijper M."/>
            <person name="Krijgsveld J."/>
            <person name="Heck A.J."/>
            <person name="Mohammed S."/>
        </authorList>
    </citation>
    <scope>ACETYLATION [LARGE SCALE ANALYSIS] AT ALA-2</scope>
    <scope>CLEAVAGE OF INITIATOR METHIONINE [LARGE SCALE ANALYSIS]</scope>
    <scope>IDENTIFICATION BY MASS SPECTROMETRY [LARGE SCALE ANALYSIS]</scope>
</reference>
<reference key="5">
    <citation type="journal article" date="2011" name="BMC Syst. Biol.">
        <title>Initial characterization of the human central proteome.</title>
        <authorList>
            <person name="Burkard T.R."/>
            <person name="Planyavsky M."/>
            <person name="Kaupe I."/>
            <person name="Breitwieser F.P."/>
            <person name="Buerckstuemmer T."/>
            <person name="Bennett K.L."/>
            <person name="Superti-Furga G."/>
            <person name="Colinge J."/>
        </authorList>
    </citation>
    <scope>IDENTIFICATION BY MASS SPECTROMETRY [LARGE SCALE ANALYSIS]</scope>
</reference>
<reference key="6">
    <citation type="journal article" date="2015" name="Proteomics">
        <title>N-terminome analysis of the human mitochondrial proteome.</title>
        <authorList>
            <person name="Vaca Jacome A.S."/>
            <person name="Rabilloud T."/>
            <person name="Schaeffer-Reiss C."/>
            <person name="Rompais M."/>
            <person name="Ayoub D."/>
            <person name="Lane L."/>
            <person name="Bairoch A."/>
            <person name="Van Dorsselaer A."/>
            <person name="Carapito C."/>
        </authorList>
    </citation>
    <scope>IDENTIFICATION BY MASS SPECTROMETRY [LARGE SCALE ANALYSIS]</scope>
</reference>
<keyword id="KW-0007">Acetylation</keyword>
<keyword id="KW-0597">Phosphoprotein</keyword>
<keyword id="KW-1267">Proteomics identification</keyword>
<keyword id="KW-1185">Reference proteome</keyword>
<comment type="interaction">
    <interactant intactId="EBI-373319">
        <id>Q96C01</id>
    </interactant>
    <interactant intactId="EBI-17183751">
        <id>X5D778</id>
        <label>ANKRD11</label>
    </interactant>
    <organismsDiffer>false</organismsDiffer>
    <experiments>3</experiments>
</comment>
<comment type="interaction">
    <interactant intactId="EBI-373319">
        <id>Q96C01</id>
    </interactant>
    <interactant intactId="EBI-744973">
        <id>Q9C005</id>
        <label>DPY30</label>
    </interactant>
    <organismsDiffer>false</organismsDiffer>
    <experiments>3</experiments>
</comment>
<comment type="interaction">
    <interactant intactId="EBI-373319">
        <id>Q96C01</id>
    </interactant>
    <interactant intactId="EBI-751857">
        <id>O15481</id>
        <label>MAGEB4</label>
    </interactant>
    <organismsDiffer>false</organismsDiffer>
    <experiments>3</experiments>
</comment>
<comment type="interaction">
    <interactant intactId="EBI-373319">
        <id>Q96C01</id>
    </interactant>
    <interactant intactId="EBI-11978579">
        <id>O95983-2</id>
        <label>MBD3</label>
    </interactant>
    <organismsDiffer>false</organismsDiffer>
    <experiments>3</experiments>
</comment>
<comment type="interaction">
    <interactant intactId="EBI-373319">
        <id>Q96C01</id>
    </interactant>
    <interactant intactId="EBI-8025850">
        <id>O14770-4</id>
        <label>MEIS2</label>
    </interactant>
    <organismsDiffer>false</organismsDiffer>
    <experiments>3</experiments>
</comment>
<comment type="interaction">
    <interactant intactId="EBI-373319">
        <id>Q96C01</id>
    </interactant>
    <interactant intactId="EBI-741158">
        <id>Q96HA8</id>
        <label>NTAQ1</label>
    </interactant>
    <organismsDiffer>false</organismsDiffer>
    <experiments>3</experiments>
</comment>
<comment type="interaction">
    <interactant intactId="EBI-373319">
        <id>Q96C01</id>
    </interactant>
    <interactant intactId="EBI-10181968">
        <id>Q7Z4N8</id>
        <label>P4HA3</label>
    </interactant>
    <organismsDiffer>false</organismsDiffer>
    <experiments>3</experiments>
</comment>
<comment type="interaction">
    <interactant intactId="EBI-373319">
        <id>Q96C01</id>
    </interactant>
    <interactant intactId="EBI-372273">
        <id>P20618</id>
        <label>PSMB1</label>
    </interactant>
    <organismsDiffer>false</organismsDiffer>
    <experiments>3</experiments>
</comment>
<comment type="interaction">
    <interactant intactId="EBI-373319">
        <id>Q96C01</id>
    </interactant>
    <interactant intactId="EBI-11984663">
        <id>Q06455-2</id>
        <label>RUNX1T1</label>
    </interactant>
    <organismsDiffer>false</organismsDiffer>
    <experiments>3</experiments>
</comment>
<comment type="interaction">
    <interactant intactId="EBI-373319">
        <id>Q96C01</id>
    </interactant>
    <interactant intactId="EBI-358489">
        <id>Q96GM5</id>
        <label>SMARCD1</label>
    </interactant>
    <organismsDiffer>false</organismsDiffer>
    <experiments>3</experiments>
</comment>
<comment type="interaction">
    <interactant intactId="EBI-373319">
        <id>Q96C01</id>
    </interactant>
    <interactant intactId="EBI-743976">
        <id>Q96LM6</id>
        <label>SPMIP9</label>
    </interactant>
    <organismsDiffer>false</organismsDiffer>
    <experiments>2</experiments>
</comment>
<comment type="interaction">
    <interactant intactId="EBI-373319">
        <id>Q96C01</id>
    </interactant>
    <interactant intactId="EBI-948354">
        <id>Q6DKK2</id>
        <label>TTC19</label>
    </interactant>
    <organismsDiffer>false</organismsDiffer>
    <experiments>3</experiments>
</comment>
<comment type="similarity">
    <text evidence="2">Belongs to the FAM136 family.</text>
</comment>
<organism>
    <name type="scientific">Homo sapiens</name>
    <name type="common">Human</name>
    <dbReference type="NCBI Taxonomy" id="9606"/>
    <lineage>
        <taxon>Eukaryota</taxon>
        <taxon>Metazoa</taxon>
        <taxon>Chordata</taxon>
        <taxon>Craniata</taxon>
        <taxon>Vertebrata</taxon>
        <taxon>Euteleostomi</taxon>
        <taxon>Mammalia</taxon>
        <taxon>Eutheria</taxon>
        <taxon>Euarchontoglires</taxon>
        <taxon>Primates</taxon>
        <taxon>Haplorrhini</taxon>
        <taxon>Catarrhini</taxon>
        <taxon>Hominidae</taxon>
        <taxon>Homo</taxon>
    </lineage>
</organism>